<evidence type="ECO:0000250" key="1">
    <source>
        <dbReference type="UniProtKB" id="Q9UJX3"/>
    </source>
</evidence>
<evidence type="ECO:0000256" key="2">
    <source>
        <dbReference type="SAM" id="MobiDB-lite"/>
    </source>
</evidence>
<evidence type="ECO:0000269" key="3">
    <source>
    </source>
</evidence>
<evidence type="ECO:0000305" key="4"/>
<evidence type="ECO:0007744" key="5">
    <source>
    </source>
</evidence>
<organism>
    <name type="scientific">Mus musculus</name>
    <name type="common">Mouse</name>
    <dbReference type="NCBI Taxonomy" id="10090"/>
    <lineage>
        <taxon>Eukaryota</taxon>
        <taxon>Metazoa</taxon>
        <taxon>Chordata</taxon>
        <taxon>Craniata</taxon>
        <taxon>Vertebrata</taxon>
        <taxon>Euteleostomi</taxon>
        <taxon>Mammalia</taxon>
        <taxon>Eutheria</taxon>
        <taxon>Euarchontoglires</taxon>
        <taxon>Glires</taxon>
        <taxon>Rodentia</taxon>
        <taxon>Myomorpha</taxon>
        <taxon>Muroidea</taxon>
        <taxon>Muridae</taxon>
        <taxon>Murinae</taxon>
        <taxon>Mus</taxon>
        <taxon>Mus</taxon>
    </lineage>
</organism>
<gene>
    <name type="primary">Anapc7</name>
    <name type="synonym">Apc7</name>
</gene>
<keyword id="KW-0007">Acetylation</keyword>
<keyword id="KW-0131">Cell cycle</keyword>
<keyword id="KW-0132">Cell division</keyword>
<keyword id="KW-0963">Cytoplasm</keyword>
<keyword id="KW-0206">Cytoskeleton</keyword>
<keyword id="KW-0498">Mitosis</keyword>
<keyword id="KW-0539">Nucleus</keyword>
<keyword id="KW-1185">Reference proteome</keyword>
<keyword id="KW-0677">Repeat</keyword>
<keyword id="KW-0802">TPR repeat</keyword>
<keyword id="KW-0833">Ubl conjugation pathway</keyword>
<feature type="chain" id="PRO_0000106262" description="Anaphase-promoting complex subunit 7">
    <location>
        <begin position="1"/>
        <end position="565"/>
    </location>
</feature>
<feature type="repeat" description="TPR 1">
    <location>
        <begin position="101"/>
        <end position="134"/>
    </location>
</feature>
<feature type="repeat" description="TPR 2">
    <location>
        <begin position="169"/>
        <end position="202"/>
    </location>
</feature>
<feature type="repeat" description="TPR 3">
    <location>
        <begin position="203"/>
        <end position="236"/>
    </location>
</feature>
<feature type="repeat" description="TPR 4">
    <location>
        <begin position="237"/>
        <end position="270"/>
    </location>
</feature>
<feature type="repeat" description="TPR 5">
    <location>
        <begin position="339"/>
        <end position="372"/>
    </location>
</feature>
<feature type="repeat" description="TPR 6">
    <location>
        <begin position="373"/>
        <end position="406"/>
    </location>
</feature>
<feature type="repeat" description="TPR 7">
    <location>
        <begin position="407"/>
        <end position="439"/>
    </location>
</feature>
<feature type="repeat" description="TPR 8">
    <location>
        <begin position="442"/>
        <end position="474"/>
    </location>
</feature>
<feature type="repeat" description="TPR 9">
    <location>
        <begin position="475"/>
        <end position="508"/>
    </location>
</feature>
<feature type="repeat" description="TPR 10">
    <location>
        <begin position="509"/>
        <end position="531"/>
    </location>
</feature>
<feature type="region of interest" description="Disordered" evidence="2">
    <location>
        <begin position="513"/>
        <end position="565"/>
    </location>
</feature>
<feature type="compositionally biased region" description="Basic and acidic residues" evidence="2">
    <location>
        <begin position="513"/>
        <end position="523"/>
    </location>
</feature>
<feature type="compositionally biased region" description="Acidic residues" evidence="2">
    <location>
        <begin position="528"/>
        <end position="549"/>
    </location>
</feature>
<feature type="modified residue" description="N6-acetyllysine" evidence="5">
    <location>
        <position position="229"/>
    </location>
</feature>
<feature type="sequence conflict" description="In Ref. 1; AAD39343." evidence="4" ref="1">
    <original>T</original>
    <variation>A</variation>
    <location>
        <position position="156"/>
    </location>
</feature>
<feature type="sequence conflict" description="In Ref. 1; AAD39343." evidence="4" ref="1">
    <original>M</original>
    <variation>T</variation>
    <location>
        <position position="188"/>
    </location>
</feature>
<feature type="sequence conflict" description="In Ref. 2; BAC27131." evidence="4" ref="2">
    <original>E</original>
    <variation>K</variation>
    <location>
        <position position="288"/>
    </location>
</feature>
<feature type="sequence conflict" description="In Ref. 2; BAC27131." evidence="4" ref="2">
    <original>Q</original>
    <variation>K</variation>
    <location>
        <position position="340"/>
    </location>
</feature>
<proteinExistence type="evidence at protein level"/>
<sequence>MSVIDHVRDMAAAGLHSNVRLLSSLLLTMSNNNPELFSPSQKYQLLVYHADSLFHDKEYRNAVSKYAMALQQKKALSKTSKVRPSTGNSASTPQSQCLPSEIEVKYKMAECYTMLKLDKDAIAVLDGIPSRQRTPKINMMLANLYKKAGQERPSVTSYKEVLRQCPLALDAILGLLSLSVKGAEVASMTMNVIQTVPNLDWLSVWIKAYAFVHTGDNSRAINTICSLEKKSLLRDNVDLLGSLADLYFRAGDSKNSVLKFEQAQMLDPYLIRGMDVYGYLLAREGRLEDVENLGCRLFNISDQHAEPWVVSGCHSFYSKRYSRALYLGAKAIQLNSNSVQALLLKGAALRNMGRVQEAIIHFREAIRLAPCRLDCYEGLIECYLASNSIREAMVMANNVYKTLGANAQTLTLLATVCLEDPVTQEKAKTLLDKALAQRPDYVKAVVKKAELLSREQKYEDGIALLRNALANQSDCVLHRILGDFLVAVNEYQEAMDQYSIALSLDPNDQKSLEGMQKMEKEESPTDATQEEDVDDMEGSGEEGDLEGSDSEAAQWADQEQWFGMQ</sequence>
<reference key="1">
    <citation type="journal article" date="1999" name="Mol. Cells">
        <title>A new autoantigen reactive with prediabetic nonobese diabetic mice sera.</title>
        <authorList>
            <person name="Kang Y."/>
            <person name="Choi K.S."/>
            <person name="Kim K.H."/>
            <person name="Kim K.S."/>
            <person name="Choi S.E."/>
            <person name="Ko I.Y."/>
            <person name="Kim H.M."/>
            <person name="Yoon J.W."/>
        </authorList>
    </citation>
    <scope>NUCLEOTIDE SEQUENCE [MRNA]</scope>
</reference>
<reference key="2">
    <citation type="journal article" date="2005" name="Science">
        <title>The transcriptional landscape of the mammalian genome.</title>
        <authorList>
            <person name="Carninci P."/>
            <person name="Kasukawa T."/>
            <person name="Katayama S."/>
            <person name="Gough J."/>
            <person name="Frith M.C."/>
            <person name="Maeda N."/>
            <person name="Oyama R."/>
            <person name="Ravasi T."/>
            <person name="Lenhard B."/>
            <person name="Wells C."/>
            <person name="Kodzius R."/>
            <person name="Shimokawa K."/>
            <person name="Bajic V.B."/>
            <person name="Brenner S.E."/>
            <person name="Batalov S."/>
            <person name="Forrest A.R."/>
            <person name="Zavolan M."/>
            <person name="Davis M.J."/>
            <person name="Wilming L.G."/>
            <person name="Aidinis V."/>
            <person name="Allen J.E."/>
            <person name="Ambesi-Impiombato A."/>
            <person name="Apweiler R."/>
            <person name="Aturaliya R.N."/>
            <person name="Bailey T.L."/>
            <person name="Bansal M."/>
            <person name="Baxter L."/>
            <person name="Beisel K.W."/>
            <person name="Bersano T."/>
            <person name="Bono H."/>
            <person name="Chalk A.M."/>
            <person name="Chiu K.P."/>
            <person name="Choudhary V."/>
            <person name="Christoffels A."/>
            <person name="Clutterbuck D.R."/>
            <person name="Crowe M.L."/>
            <person name="Dalla E."/>
            <person name="Dalrymple B.P."/>
            <person name="de Bono B."/>
            <person name="Della Gatta G."/>
            <person name="di Bernardo D."/>
            <person name="Down T."/>
            <person name="Engstrom P."/>
            <person name="Fagiolini M."/>
            <person name="Faulkner G."/>
            <person name="Fletcher C.F."/>
            <person name="Fukushima T."/>
            <person name="Furuno M."/>
            <person name="Futaki S."/>
            <person name="Gariboldi M."/>
            <person name="Georgii-Hemming P."/>
            <person name="Gingeras T.R."/>
            <person name="Gojobori T."/>
            <person name="Green R.E."/>
            <person name="Gustincich S."/>
            <person name="Harbers M."/>
            <person name="Hayashi Y."/>
            <person name="Hensch T.K."/>
            <person name="Hirokawa N."/>
            <person name="Hill D."/>
            <person name="Huminiecki L."/>
            <person name="Iacono M."/>
            <person name="Ikeo K."/>
            <person name="Iwama A."/>
            <person name="Ishikawa T."/>
            <person name="Jakt M."/>
            <person name="Kanapin A."/>
            <person name="Katoh M."/>
            <person name="Kawasawa Y."/>
            <person name="Kelso J."/>
            <person name="Kitamura H."/>
            <person name="Kitano H."/>
            <person name="Kollias G."/>
            <person name="Krishnan S.P."/>
            <person name="Kruger A."/>
            <person name="Kummerfeld S.K."/>
            <person name="Kurochkin I.V."/>
            <person name="Lareau L.F."/>
            <person name="Lazarevic D."/>
            <person name="Lipovich L."/>
            <person name="Liu J."/>
            <person name="Liuni S."/>
            <person name="McWilliam S."/>
            <person name="Madan Babu M."/>
            <person name="Madera M."/>
            <person name="Marchionni L."/>
            <person name="Matsuda H."/>
            <person name="Matsuzawa S."/>
            <person name="Miki H."/>
            <person name="Mignone F."/>
            <person name="Miyake S."/>
            <person name="Morris K."/>
            <person name="Mottagui-Tabar S."/>
            <person name="Mulder N."/>
            <person name="Nakano N."/>
            <person name="Nakauchi H."/>
            <person name="Ng P."/>
            <person name="Nilsson R."/>
            <person name="Nishiguchi S."/>
            <person name="Nishikawa S."/>
            <person name="Nori F."/>
            <person name="Ohara O."/>
            <person name="Okazaki Y."/>
            <person name="Orlando V."/>
            <person name="Pang K.C."/>
            <person name="Pavan W.J."/>
            <person name="Pavesi G."/>
            <person name="Pesole G."/>
            <person name="Petrovsky N."/>
            <person name="Piazza S."/>
            <person name="Reed J."/>
            <person name="Reid J.F."/>
            <person name="Ring B.Z."/>
            <person name="Ringwald M."/>
            <person name="Rost B."/>
            <person name="Ruan Y."/>
            <person name="Salzberg S.L."/>
            <person name="Sandelin A."/>
            <person name="Schneider C."/>
            <person name="Schoenbach C."/>
            <person name="Sekiguchi K."/>
            <person name="Semple C.A."/>
            <person name="Seno S."/>
            <person name="Sessa L."/>
            <person name="Sheng Y."/>
            <person name="Shibata Y."/>
            <person name="Shimada H."/>
            <person name="Shimada K."/>
            <person name="Silva D."/>
            <person name="Sinclair B."/>
            <person name="Sperling S."/>
            <person name="Stupka E."/>
            <person name="Sugiura K."/>
            <person name="Sultana R."/>
            <person name="Takenaka Y."/>
            <person name="Taki K."/>
            <person name="Tammoja K."/>
            <person name="Tan S.L."/>
            <person name="Tang S."/>
            <person name="Taylor M.S."/>
            <person name="Tegner J."/>
            <person name="Teichmann S.A."/>
            <person name="Ueda H.R."/>
            <person name="van Nimwegen E."/>
            <person name="Verardo R."/>
            <person name="Wei C.L."/>
            <person name="Yagi K."/>
            <person name="Yamanishi H."/>
            <person name="Zabarovsky E."/>
            <person name="Zhu S."/>
            <person name="Zimmer A."/>
            <person name="Hide W."/>
            <person name="Bult C."/>
            <person name="Grimmond S.M."/>
            <person name="Teasdale R.D."/>
            <person name="Liu E.T."/>
            <person name="Brusic V."/>
            <person name="Quackenbush J."/>
            <person name="Wahlestedt C."/>
            <person name="Mattick J.S."/>
            <person name="Hume D.A."/>
            <person name="Kai C."/>
            <person name="Sasaki D."/>
            <person name="Tomaru Y."/>
            <person name="Fukuda S."/>
            <person name="Kanamori-Katayama M."/>
            <person name="Suzuki M."/>
            <person name="Aoki J."/>
            <person name="Arakawa T."/>
            <person name="Iida J."/>
            <person name="Imamura K."/>
            <person name="Itoh M."/>
            <person name="Kato T."/>
            <person name="Kawaji H."/>
            <person name="Kawagashira N."/>
            <person name="Kawashima T."/>
            <person name="Kojima M."/>
            <person name="Kondo S."/>
            <person name="Konno H."/>
            <person name="Nakano K."/>
            <person name="Ninomiya N."/>
            <person name="Nishio T."/>
            <person name="Okada M."/>
            <person name="Plessy C."/>
            <person name="Shibata K."/>
            <person name="Shiraki T."/>
            <person name="Suzuki S."/>
            <person name="Tagami M."/>
            <person name="Waki K."/>
            <person name="Watahiki A."/>
            <person name="Okamura-Oho Y."/>
            <person name="Suzuki H."/>
            <person name="Kawai J."/>
            <person name="Hayashizaki Y."/>
        </authorList>
    </citation>
    <scope>NUCLEOTIDE SEQUENCE [LARGE SCALE MRNA]</scope>
    <source>
        <strain>C57BL/6J</strain>
        <tissue>Bone marrow</tissue>
        <tissue>Hippocampus</tissue>
    </source>
</reference>
<reference key="3">
    <citation type="journal article" date="2004" name="Genome Res.">
        <title>The status, quality, and expansion of the NIH full-length cDNA project: the Mammalian Gene Collection (MGC).</title>
        <authorList>
            <consortium name="The MGC Project Team"/>
        </authorList>
    </citation>
    <scope>NUCLEOTIDE SEQUENCE [LARGE SCALE MRNA]</scope>
    <source>
        <tissue>Mammary tumor</tissue>
    </source>
</reference>
<reference key="4">
    <citation type="journal article" date="2010" name="Cell">
        <title>A tissue-specific atlas of mouse protein phosphorylation and expression.</title>
        <authorList>
            <person name="Huttlin E.L."/>
            <person name="Jedrychowski M.P."/>
            <person name="Elias J.E."/>
            <person name="Goswami T."/>
            <person name="Rad R."/>
            <person name="Beausoleil S.A."/>
            <person name="Villen J."/>
            <person name="Haas W."/>
            <person name="Sowa M.E."/>
            <person name="Gygi S.P."/>
        </authorList>
    </citation>
    <scope>IDENTIFICATION BY MASS SPECTROMETRY [LARGE SCALE ANALYSIS]</scope>
    <source>
        <tissue>Spleen</tissue>
        <tissue>Testis</tissue>
    </source>
</reference>
<reference key="5">
    <citation type="journal article" date="2013" name="Mol. Cell">
        <title>SIRT5-mediated lysine desuccinylation impacts diverse metabolic pathways.</title>
        <authorList>
            <person name="Park J."/>
            <person name="Chen Y."/>
            <person name="Tishkoff D.X."/>
            <person name="Peng C."/>
            <person name="Tan M."/>
            <person name="Dai L."/>
            <person name="Xie Z."/>
            <person name="Zhang Y."/>
            <person name="Zwaans B.M."/>
            <person name="Skinner M.E."/>
            <person name="Lombard D.B."/>
            <person name="Zhao Y."/>
        </authorList>
    </citation>
    <scope>ACETYLATION [LARGE SCALE ANALYSIS] AT LYS-229</scope>
    <scope>IDENTIFICATION BY MASS SPECTROMETRY [LARGE SCALE ANALYSIS]</scope>
    <source>
        <tissue>Embryonic fibroblast</tissue>
    </source>
</reference>
<reference key="6">
    <citation type="journal article" date="2022" name="Mol. Cell">
        <title>APC7 mediates ubiquitin signaling in constitutive heterochromatin in the developing mammalian brain.</title>
        <authorList>
            <person name="Ferguson C.J."/>
            <person name="Urso O."/>
            <person name="Bodrug T."/>
            <person name="Gassaway B.M."/>
            <person name="Watson E.R."/>
            <person name="Prabu J.R."/>
            <person name="Lara-Gonzalez P."/>
            <person name="Martinez-Chacin R.C."/>
            <person name="Wu D.Y."/>
            <person name="Brigatti K.W."/>
            <person name="Puffenberger E.G."/>
            <person name="Taylor C.M."/>
            <person name="Haas-Givler B."/>
            <person name="Jinks R.N."/>
            <person name="Strauss K.A."/>
            <person name="Desai A."/>
            <person name="Gabel H.W."/>
            <person name="Gygi S.P."/>
            <person name="Schulman B.A."/>
            <person name="Brown N.G."/>
            <person name="Bonni A."/>
        </authorList>
    </citation>
    <scope>FUNCTION</scope>
    <scope>DISRUPTION PHENOTYPE</scope>
</reference>
<accession>Q9WVM3</accession>
<accession>Q3UBM7</accession>
<accession>Q8BSR2</accession>
<accession>Q91W13</accession>
<comment type="function">
    <text evidence="1 3">Component of the anaphase promoting complex/cyclosome (APC/C), a cell cycle-regulated E3 ubiquitin ligase that controls progression through mitosis and the G1 phase of the cell cycle (By similarity). The APC/C complex acts by mediating ubiquitination and subsequent degradation of target proteins: it mainly mediates the formation of 'Lys-11'-linked polyubiquitin chains and, to a lower extent, the formation of 'Lys-48'- and 'Lys-63'-linked polyubiquitin chains (By similarity). The APC/C complex catalyzes assembly of branched 'Lys-11'-/'Lys-48'-linked branched ubiquitin chains on target proteins (By similarity). APC7 is not required for the assembly of the APC/C complex, but has an enzyme-substrate adapter activity mediating the processive ubiquitination of specific substrates (By similarity). Involved in brain development through the specific ubiquitination and clearance of MKI67 from constitutive heterochromatin after neuronal progenitors exit mitosis (PubMed:34942119).</text>
</comment>
<comment type="pathway">
    <text evidence="3">Protein modification; protein ubiquitination.</text>
</comment>
<comment type="subunit">
    <text evidence="1">V-shaped homodimer. The mammalian APC/C is composed at least of 14 distinct subunits ANAPC1, ANAPC2, CDC27/APC3, ANAPC4, ANAPC5, CDC16/APC6, ANAPC7, CDC23/APC8, ANAPC10, ANAPC11, CDC26/APC12, ANAPC13, ANAPC15 and ANAPC16 that assemble into a complex of at least 19 chains with a combined molecular mass of around 1.2 MDa; APC/C interacts with FZR1 and FBXO5.</text>
</comment>
<comment type="subcellular location">
    <subcellularLocation>
        <location evidence="1">Cytoplasm</location>
        <location evidence="1">Cytoskeleton</location>
    </subcellularLocation>
    <subcellularLocation>
        <location evidence="1">Nucleus</location>
    </subcellularLocation>
    <subcellularLocation>
        <location evidence="1">Cytoplasm</location>
        <location evidence="1">Cytoskeleton</location>
        <location evidence="1">Spindle</location>
    </subcellularLocation>
    <text evidence="1">Localizes to spindle during metaphase and to cytoplasmic microtubules during interphase.</text>
</comment>
<comment type="disruption phenotype">
    <text evidence="3">Mice lacking Anapc7 show growth delay around weaning, although birth weight and adult size are normal. They show sensorimotor dysfunction in locomotive assays, as well as defects in the regulation of short- and long-term memory retrieval of the contextual fear response. Loss of the protein does not alter the anatomy of brain regions.</text>
</comment>
<comment type="similarity">
    <text evidence="4">Belongs to the APC7 family.</text>
</comment>
<name>APC7_MOUSE</name>
<dbReference type="EMBL" id="AF076607">
    <property type="protein sequence ID" value="AAD39343.2"/>
    <property type="molecule type" value="mRNA"/>
</dbReference>
<dbReference type="EMBL" id="AK030775">
    <property type="protein sequence ID" value="BAC27131.1"/>
    <property type="molecule type" value="mRNA"/>
</dbReference>
<dbReference type="EMBL" id="AK150764">
    <property type="protein sequence ID" value="BAE29831.1"/>
    <property type="molecule type" value="mRNA"/>
</dbReference>
<dbReference type="EMBL" id="AK150891">
    <property type="protein sequence ID" value="BAE29937.1"/>
    <property type="molecule type" value="mRNA"/>
</dbReference>
<dbReference type="EMBL" id="AK153114">
    <property type="protein sequence ID" value="BAE31731.1"/>
    <property type="molecule type" value="mRNA"/>
</dbReference>
<dbReference type="EMBL" id="AK159523">
    <property type="protein sequence ID" value="BAE35152.1"/>
    <property type="molecule type" value="mRNA"/>
</dbReference>
<dbReference type="EMBL" id="AK164202">
    <property type="protein sequence ID" value="BAE37680.1"/>
    <property type="molecule type" value="mRNA"/>
</dbReference>
<dbReference type="EMBL" id="BC006635">
    <property type="protein sequence ID" value="AAH06635.1"/>
    <property type="molecule type" value="mRNA"/>
</dbReference>
<dbReference type="CCDS" id="CCDS19649.1"/>
<dbReference type="RefSeq" id="NP_062779.3">
    <property type="nucleotide sequence ID" value="NM_019805.4"/>
</dbReference>
<dbReference type="RefSeq" id="XP_036021221.1">
    <property type="nucleotide sequence ID" value="XM_036165328.1"/>
</dbReference>
<dbReference type="SMR" id="Q9WVM3"/>
<dbReference type="BioGRID" id="207898">
    <property type="interactions" value="7"/>
</dbReference>
<dbReference type="CORUM" id="Q9WVM3"/>
<dbReference type="FunCoup" id="Q9WVM3">
    <property type="interactions" value="2533"/>
</dbReference>
<dbReference type="IntAct" id="Q9WVM3">
    <property type="interactions" value="3"/>
</dbReference>
<dbReference type="MINT" id="Q9WVM3"/>
<dbReference type="STRING" id="10090.ENSMUSP00000113928"/>
<dbReference type="GlyGen" id="Q9WVM3">
    <property type="glycosylation" value="3 sites, 1 N-linked glycan (1 site), 1 O-linked glycan (1 site)"/>
</dbReference>
<dbReference type="iPTMnet" id="Q9WVM3"/>
<dbReference type="PhosphoSitePlus" id="Q9WVM3"/>
<dbReference type="PaxDb" id="10090-ENSMUSP00000113928"/>
<dbReference type="ProteomicsDB" id="296369"/>
<dbReference type="Pumba" id="Q9WVM3"/>
<dbReference type="Antibodypedia" id="4033">
    <property type="antibodies" value="99 antibodies from 27 providers"/>
</dbReference>
<dbReference type="DNASU" id="56317"/>
<dbReference type="Ensembl" id="ENSMUST00000031422.10">
    <property type="protein sequence ID" value="ENSMUSP00000031422.4"/>
    <property type="gene ID" value="ENSMUSG00000029466.12"/>
</dbReference>
<dbReference type="Ensembl" id="ENSMUST00000122010.8">
    <property type="protein sequence ID" value="ENSMUSP00000113928.2"/>
    <property type="gene ID" value="ENSMUSG00000029466.12"/>
</dbReference>
<dbReference type="GeneID" id="56317"/>
<dbReference type="KEGG" id="mmu:56317"/>
<dbReference type="UCSC" id="uc008zlh.2">
    <property type="organism name" value="mouse"/>
</dbReference>
<dbReference type="AGR" id="MGI:1929711"/>
<dbReference type="CTD" id="51434"/>
<dbReference type="MGI" id="MGI:1929711">
    <property type="gene designation" value="Anapc7"/>
</dbReference>
<dbReference type="VEuPathDB" id="HostDB:ENSMUSG00000029466"/>
<dbReference type="eggNOG" id="KOG1174">
    <property type="taxonomic scope" value="Eukaryota"/>
</dbReference>
<dbReference type="GeneTree" id="ENSGT00950000182950"/>
<dbReference type="HOGENOM" id="CLU_026953_2_0_1"/>
<dbReference type="InParanoid" id="Q9WVM3"/>
<dbReference type="OMA" id="MGECYYY"/>
<dbReference type="OrthoDB" id="308440at2759"/>
<dbReference type="PhylomeDB" id="Q9WVM3"/>
<dbReference type="TreeFam" id="TF105445"/>
<dbReference type="Reactome" id="R-MMU-141430">
    <property type="pathway name" value="Inactivation of APC/C via direct inhibition of the APC/C complex"/>
</dbReference>
<dbReference type="Reactome" id="R-MMU-174048">
    <property type="pathway name" value="APC/C:Cdc20 mediated degradation of Cyclin B"/>
</dbReference>
<dbReference type="Reactome" id="R-MMU-174084">
    <property type="pathway name" value="Autodegradation of Cdh1 by Cdh1:APC/C"/>
</dbReference>
<dbReference type="Reactome" id="R-MMU-174154">
    <property type="pathway name" value="APC/C:Cdc20 mediated degradation of Securin"/>
</dbReference>
<dbReference type="Reactome" id="R-MMU-174178">
    <property type="pathway name" value="APC/C:Cdh1 mediated degradation of Cdc20 and other APC/C:Cdh1 targeted proteins in late mitosis/early G1"/>
</dbReference>
<dbReference type="Reactome" id="R-MMU-174184">
    <property type="pathway name" value="Cdc20:Phospho-APC/C mediated degradation of Cyclin A"/>
</dbReference>
<dbReference type="Reactome" id="R-MMU-176407">
    <property type="pathway name" value="Conversion from APC/C:Cdc20 to APC/C:Cdh1 in late anaphase"/>
</dbReference>
<dbReference type="Reactome" id="R-MMU-176408">
    <property type="pathway name" value="Regulation of APC/C activators between G1/S and early anaphase"/>
</dbReference>
<dbReference type="Reactome" id="R-MMU-176409">
    <property type="pathway name" value="APC/C:Cdc20 mediated degradation of mitotic proteins"/>
</dbReference>
<dbReference type="Reactome" id="R-MMU-176412">
    <property type="pathway name" value="Phosphorylation of the APC/C"/>
</dbReference>
<dbReference type="Reactome" id="R-MMU-179409">
    <property type="pathway name" value="APC-Cdc20 mediated degradation of Nek2A"/>
</dbReference>
<dbReference type="Reactome" id="R-MMU-2467813">
    <property type="pathway name" value="Separation of Sister Chromatids"/>
</dbReference>
<dbReference type="Reactome" id="R-MMU-2559582">
    <property type="pathway name" value="Senescence-Associated Secretory Phenotype (SASP)"/>
</dbReference>
<dbReference type="Reactome" id="R-MMU-68867">
    <property type="pathway name" value="Assembly of the pre-replicative complex"/>
</dbReference>
<dbReference type="Reactome" id="R-MMU-69017">
    <property type="pathway name" value="CDK-mediated phosphorylation and removal of Cdc6"/>
</dbReference>
<dbReference type="Reactome" id="R-MMU-983168">
    <property type="pathway name" value="Antigen processing: Ubiquitination &amp; Proteasome degradation"/>
</dbReference>
<dbReference type="UniPathway" id="UPA00143"/>
<dbReference type="BioGRID-ORCS" id="56317">
    <property type="hits" value="3 hits in 76 CRISPR screens"/>
</dbReference>
<dbReference type="ChiTaRS" id="Anapc7">
    <property type="organism name" value="mouse"/>
</dbReference>
<dbReference type="PRO" id="PR:Q9WVM3"/>
<dbReference type="Proteomes" id="UP000000589">
    <property type="component" value="Chromosome 5"/>
</dbReference>
<dbReference type="RNAct" id="Q9WVM3">
    <property type="molecule type" value="protein"/>
</dbReference>
<dbReference type="Bgee" id="ENSMUSG00000029466">
    <property type="expression patterns" value="Expressed in ear vesicle and 252 other cell types or tissues"/>
</dbReference>
<dbReference type="ExpressionAtlas" id="Q9WVM3">
    <property type="expression patterns" value="baseline and differential"/>
</dbReference>
<dbReference type="GO" id="GO:0005680">
    <property type="term" value="C:anaphase-promoting complex"/>
    <property type="evidence" value="ECO:0000250"/>
    <property type="project" value="UniProtKB"/>
</dbReference>
<dbReference type="GO" id="GO:0005737">
    <property type="term" value="C:cytoplasm"/>
    <property type="evidence" value="ECO:0007669"/>
    <property type="project" value="UniProtKB-KW"/>
</dbReference>
<dbReference type="GO" id="GO:0000792">
    <property type="term" value="C:heterochromatin"/>
    <property type="evidence" value="ECO:0000250"/>
    <property type="project" value="UniProtKB"/>
</dbReference>
<dbReference type="GO" id="GO:0045171">
    <property type="term" value="C:intercellular bridge"/>
    <property type="evidence" value="ECO:0007669"/>
    <property type="project" value="Ensembl"/>
</dbReference>
<dbReference type="GO" id="GO:0015630">
    <property type="term" value="C:microtubule cytoskeleton"/>
    <property type="evidence" value="ECO:0000250"/>
    <property type="project" value="UniProtKB"/>
</dbReference>
<dbReference type="GO" id="GO:0072686">
    <property type="term" value="C:mitotic spindle"/>
    <property type="evidence" value="ECO:0007669"/>
    <property type="project" value="Ensembl"/>
</dbReference>
<dbReference type="GO" id="GO:0005654">
    <property type="term" value="C:nucleoplasm"/>
    <property type="evidence" value="ECO:0007669"/>
    <property type="project" value="Ensembl"/>
</dbReference>
<dbReference type="GO" id="GO:0005634">
    <property type="term" value="C:nucleus"/>
    <property type="evidence" value="ECO:0000250"/>
    <property type="project" value="UniProtKB"/>
</dbReference>
<dbReference type="GO" id="GO:0005819">
    <property type="term" value="C:spindle"/>
    <property type="evidence" value="ECO:0000250"/>
    <property type="project" value="UniProtKB"/>
</dbReference>
<dbReference type="GO" id="GO:0140767">
    <property type="term" value="F:enzyme-substrate adaptor activity"/>
    <property type="evidence" value="ECO:0000250"/>
    <property type="project" value="UniProtKB"/>
</dbReference>
<dbReference type="GO" id="GO:0019903">
    <property type="term" value="F:protein phosphatase binding"/>
    <property type="evidence" value="ECO:0007669"/>
    <property type="project" value="Ensembl"/>
</dbReference>
<dbReference type="GO" id="GO:0031145">
    <property type="term" value="P:anaphase-promoting complex-dependent catabolic process"/>
    <property type="evidence" value="ECO:0000250"/>
    <property type="project" value="UniProtKB"/>
</dbReference>
<dbReference type="GO" id="GO:0007420">
    <property type="term" value="P:brain development"/>
    <property type="evidence" value="ECO:0000250"/>
    <property type="project" value="UniProtKB"/>
</dbReference>
<dbReference type="GO" id="GO:0051301">
    <property type="term" value="P:cell division"/>
    <property type="evidence" value="ECO:0007669"/>
    <property type="project" value="UniProtKB-KW"/>
</dbReference>
<dbReference type="GO" id="GO:0141198">
    <property type="term" value="P:protein branched polyubiquitination"/>
    <property type="evidence" value="ECO:0000250"/>
    <property type="project" value="UniProtKB"/>
</dbReference>
<dbReference type="GO" id="GO:0070979">
    <property type="term" value="P:protein K11-linked ubiquitination"/>
    <property type="evidence" value="ECO:0000250"/>
    <property type="project" value="UniProtKB"/>
</dbReference>
<dbReference type="GO" id="GO:0070936">
    <property type="term" value="P:protein K48-linked ubiquitination"/>
    <property type="evidence" value="ECO:0000250"/>
    <property type="project" value="UniProtKB"/>
</dbReference>
<dbReference type="GO" id="GO:0016567">
    <property type="term" value="P:protein ubiquitination"/>
    <property type="evidence" value="ECO:0000250"/>
    <property type="project" value="UniProtKB"/>
</dbReference>
<dbReference type="FunFam" id="1.25.40.10:FF:000068">
    <property type="entry name" value="Anaphase promoting complex subunit 7"/>
    <property type="match status" value="1"/>
</dbReference>
<dbReference type="FunFam" id="1.25.40.10:FF:000126">
    <property type="entry name" value="Anaphase promoting complex subunit 7"/>
    <property type="match status" value="1"/>
</dbReference>
<dbReference type="FunFam" id="1.25.40.10:FF:000178">
    <property type="entry name" value="Anaphase promoting complex subunit 7"/>
    <property type="match status" value="1"/>
</dbReference>
<dbReference type="FunFam" id="1.25.40.10:FF:000238">
    <property type="entry name" value="Anaphase promoting complex subunit 7"/>
    <property type="match status" value="1"/>
</dbReference>
<dbReference type="Gene3D" id="1.25.40.10">
    <property type="entry name" value="Tetratricopeptide repeat domain"/>
    <property type="match status" value="3"/>
</dbReference>
<dbReference type="InterPro" id="IPR011990">
    <property type="entry name" value="TPR-like_helical_dom_sf"/>
</dbReference>
<dbReference type="InterPro" id="IPR019734">
    <property type="entry name" value="TPR_rpt"/>
</dbReference>
<dbReference type="PANTHER" id="PTHR12558:SF36">
    <property type="entry name" value="ANAPHASE-PROMOTING COMPLEX SUBUNIT 7"/>
    <property type="match status" value="1"/>
</dbReference>
<dbReference type="PANTHER" id="PTHR12558">
    <property type="entry name" value="CELL DIVISION CYCLE 16,23,27"/>
    <property type="match status" value="1"/>
</dbReference>
<dbReference type="Pfam" id="PF13432">
    <property type="entry name" value="TPR_16"/>
    <property type="match status" value="1"/>
</dbReference>
<dbReference type="Pfam" id="PF13181">
    <property type="entry name" value="TPR_8"/>
    <property type="match status" value="1"/>
</dbReference>
<dbReference type="SMART" id="SM00028">
    <property type="entry name" value="TPR"/>
    <property type="match status" value="5"/>
</dbReference>
<dbReference type="SUPFAM" id="SSF48452">
    <property type="entry name" value="TPR-like"/>
    <property type="match status" value="2"/>
</dbReference>
<dbReference type="PROSITE" id="PS50005">
    <property type="entry name" value="TPR"/>
    <property type="match status" value="5"/>
</dbReference>
<dbReference type="PROSITE" id="PS50293">
    <property type="entry name" value="TPR_REGION"/>
    <property type="match status" value="1"/>
</dbReference>
<protein>
    <recommendedName>
        <fullName>Anaphase-promoting complex subunit 7</fullName>
        <shortName>APC7</shortName>
    </recommendedName>
    <alternativeName>
        <fullName>Cyclosome subunit 7</fullName>
    </alternativeName>
    <alternativeName>
        <fullName>Prediabetic NOD sera-reactive autoantigen</fullName>
    </alternativeName>
</protein>